<proteinExistence type="inferred from homology"/>
<reference key="1">
    <citation type="journal article" date="2008" name="BMC Genomics">
        <title>The missing link: Bordetella petrii is endowed with both the metabolic versatility of environmental bacteria and virulence traits of pathogenic Bordetellae.</title>
        <authorList>
            <person name="Gross R."/>
            <person name="Guzman C.A."/>
            <person name="Sebaihia M."/>
            <person name="Martin dos Santos V.A.P."/>
            <person name="Pieper D.H."/>
            <person name="Koebnik R."/>
            <person name="Lechner M."/>
            <person name="Bartels D."/>
            <person name="Buhrmester J."/>
            <person name="Choudhuri J.V."/>
            <person name="Ebensen T."/>
            <person name="Gaigalat L."/>
            <person name="Herrmann S."/>
            <person name="Khachane A.N."/>
            <person name="Larisch C."/>
            <person name="Link S."/>
            <person name="Linke B."/>
            <person name="Meyer F."/>
            <person name="Mormann S."/>
            <person name="Nakunst D."/>
            <person name="Rueckert C."/>
            <person name="Schneiker-Bekel S."/>
            <person name="Schulze K."/>
            <person name="Voerholter F.-J."/>
            <person name="Yevsa T."/>
            <person name="Engle J.T."/>
            <person name="Goldman W.E."/>
            <person name="Puehler A."/>
            <person name="Goebel U.B."/>
            <person name="Goesmann A."/>
            <person name="Bloecker H."/>
            <person name="Kaiser O."/>
            <person name="Martinez-Arias R."/>
        </authorList>
    </citation>
    <scope>NUCLEOTIDE SEQUENCE [LARGE SCALE GENOMIC DNA]</scope>
    <source>
        <strain>ATCC BAA-461 / DSM 12804 / CCUG 43448</strain>
    </source>
</reference>
<comment type="function">
    <text evidence="1">Converts heme B (protoheme IX) to heme O by substitution of the vinyl group on carbon 2 of heme B porphyrin ring with a hydroxyethyl farnesyl side group.</text>
</comment>
<comment type="catalytic activity">
    <reaction evidence="1">
        <text>heme b + (2E,6E)-farnesyl diphosphate + H2O = Fe(II)-heme o + diphosphate</text>
        <dbReference type="Rhea" id="RHEA:28070"/>
        <dbReference type="ChEBI" id="CHEBI:15377"/>
        <dbReference type="ChEBI" id="CHEBI:33019"/>
        <dbReference type="ChEBI" id="CHEBI:60344"/>
        <dbReference type="ChEBI" id="CHEBI:60530"/>
        <dbReference type="ChEBI" id="CHEBI:175763"/>
        <dbReference type="EC" id="2.5.1.141"/>
    </reaction>
</comment>
<comment type="pathway">
    <text evidence="1">Porphyrin-containing compound metabolism; heme O biosynthesis; heme O from protoheme: step 1/1.</text>
</comment>
<comment type="subcellular location">
    <subcellularLocation>
        <location evidence="1">Cell inner membrane</location>
        <topology evidence="1">Multi-pass membrane protein</topology>
    </subcellularLocation>
</comment>
<comment type="miscellaneous">
    <text evidence="1">Carbon 2 of the heme B porphyrin ring is defined according to the Fischer nomenclature.</text>
</comment>
<comment type="similarity">
    <text evidence="1">Belongs to the UbiA prenyltransferase family. Protoheme IX farnesyltransferase subfamily.</text>
</comment>
<accession>A9HWL4</accession>
<sequence>MTSLAAPQTGLLRQYLVLTKPRVTQLAVFCAIIGMFLAVPGLPDPGRVVFGTLGIWLLAAAAFAINCLIEQEIDARMLRTARRATARGTISAAQVISLSGLLGGAGMLVLYHLVNPLTMWLTFATFVGYAIIYTVILKPRTPQNIVIGGLSGAMPPALGWAAVADAVPAEAWVLVLIIFIWTPPHFWALALYRNHDYAKAGLPMLPVTHGQRFTRLHILLYSLALVATTTLPYIIRMSGLLYLASALALGGMFVAYAWRLYREYSDALARRLFRFSILYLALLFAALLMDHWAGLLA</sequence>
<protein>
    <recommendedName>
        <fullName evidence="1">Protoheme IX farnesyltransferase</fullName>
        <ecNumber evidence="1">2.5.1.141</ecNumber>
    </recommendedName>
    <alternativeName>
        <fullName evidence="1">Heme B farnesyltransferase</fullName>
    </alternativeName>
    <alternativeName>
        <fullName evidence="1">Heme O synthase</fullName>
    </alternativeName>
</protein>
<feature type="chain" id="PRO_0000346030" description="Protoheme IX farnesyltransferase">
    <location>
        <begin position="1"/>
        <end position="297"/>
    </location>
</feature>
<feature type="transmembrane region" description="Helical" evidence="1">
    <location>
        <begin position="23"/>
        <end position="43"/>
    </location>
</feature>
<feature type="transmembrane region" description="Helical" evidence="1">
    <location>
        <begin position="49"/>
        <end position="69"/>
    </location>
</feature>
<feature type="transmembrane region" description="Helical" evidence="1">
    <location>
        <begin position="90"/>
        <end position="110"/>
    </location>
</feature>
<feature type="transmembrane region" description="Helical" evidence="1">
    <location>
        <begin position="117"/>
        <end position="137"/>
    </location>
</feature>
<feature type="transmembrane region" description="Helical" evidence="1">
    <location>
        <begin position="144"/>
        <end position="164"/>
    </location>
</feature>
<feature type="transmembrane region" description="Helical" evidence="1">
    <location>
        <begin position="171"/>
        <end position="191"/>
    </location>
</feature>
<feature type="transmembrane region" description="Helical" evidence="1">
    <location>
        <begin position="215"/>
        <end position="235"/>
    </location>
</feature>
<feature type="transmembrane region" description="Helical" evidence="1">
    <location>
        <begin position="238"/>
        <end position="258"/>
    </location>
</feature>
<feature type="transmembrane region" description="Helical" evidence="1">
    <location>
        <begin position="277"/>
        <end position="297"/>
    </location>
</feature>
<organism>
    <name type="scientific">Bordetella petrii (strain ATCC BAA-461 / DSM 12804 / CCUG 43448)</name>
    <dbReference type="NCBI Taxonomy" id="340100"/>
    <lineage>
        <taxon>Bacteria</taxon>
        <taxon>Pseudomonadati</taxon>
        <taxon>Pseudomonadota</taxon>
        <taxon>Betaproteobacteria</taxon>
        <taxon>Burkholderiales</taxon>
        <taxon>Alcaligenaceae</taxon>
        <taxon>Bordetella</taxon>
    </lineage>
</organism>
<keyword id="KW-0997">Cell inner membrane</keyword>
<keyword id="KW-1003">Cell membrane</keyword>
<keyword id="KW-0350">Heme biosynthesis</keyword>
<keyword id="KW-0472">Membrane</keyword>
<keyword id="KW-0808">Transferase</keyword>
<keyword id="KW-0812">Transmembrane</keyword>
<keyword id="KW-1133">Transmembrane helix</keyword>
<evidence type="ECO:0000255" key="1">
    <source>
        <dbReference type="HAMAP-Rule" id="MF_00154"/>
    </source>
</evidence>
<dbReference type="EC" id="2.5.1.141" evidence="1"/>
<dbReference type="EMBL" id="AM902716">
    <property type="protein sequence ID" value="CAP40508.1"/>
    <property type="molecule type" value="Genomic_DNA"/>
</dbReference>
<dbReference type="SMR" id="A9HWL4"/>
<dbReference type="STRING" id="94624.Bpet0177"/>
<dbReference type="KEGG" id="bpt:Bpet0177"/>
<dbReference type="eggNOG" id="COG0109">
    <property type="taxonomic scope" value="Bacteria"/>
</dbReference>
<dbReference type="UniPathway" id="UPA00834">
    <property type="reaction ID" value="UER00712"/>
</dbReference>
<dbReference type="Proteomes" id="UP000001225">
    <property type="component" value="Chromosome"/>
</dbReference>
<dbReference type="GO" id="GO:0005886">
    <property type="term" value="C:plasma membrane"/>
    <property type="evidence" value="ECO:0007669"/>
    <property type="project" value="UniProtKB-SubCell"/>
</dbReference>
<dbReference type="GO" id="GO:0008495">
    <property type="term" value="F:protoheme IX farnesyltransferase activity"/>
    <property type="evidence" value="ECO:0007669"/>
    <property type="project" value="UniProtKB-UniRule"/>
</dbReference>
<dbReference type="GO" id="GO:0048034">
    <property type="term" value="P:heme O biosynthetic process"/>
    <property type="evidence" value="ECO:0007669"/>
    <property type="project" value="UniProtKB-UniRule"/>
</dbReference>
<dbReference type="CDD" id="cd13957">
    <property type="entry name" value="PT_UbiA_Cox10"/>
    <property type="match status" value="1"/>
</dbReference>
<dbReference type="Gene3D" id="1.10.357.140">
    <property type="entry name" value="UbiA prenyltransferase"/>
    <property type="match status" value="1"/>
</dbReference>
<dbReference type="HAMAP" id="MF_00154">
    <property type="entry name" value="CyoE_CtaB"/>
    <property type="match status" value="1"/>
</dbReference>
<dbReference type="InterPro" id="IPR006369">
    <property type="entry name" value="Protohaem_IX_farnesylTrfase"/>
</dbReference>
<dbReference type="InterPro" id="IPR000537">
    <property type="entry name" value="UbiA_prenyltransferase"/>
</dbReference>
<dbReference type="InterPro" id="IPR030470">
    <property type="entry name" value="UbiA_prenylTrfase_CS"/>
</dbReference>
<dbReference type="InterPro" id="IPR044878">
    <property type="entry name" value="UbiA_sf"/>
</dbReference>
<dbReference type="NCBIfam" id="TIGR01473">
    <property type="entry name" value="cyoE_ctaB"/>
    <property type="match status" value="1"/>
</dbReference>
<dbReference type="NCBIfam" id="NF003349">
    <property type="entry name" value="PRK04375.1-2"/>
    <property type="match status" value="1"/>
</dbReference>
<dbReference type="PANTHER" id="PTHR43448:SF7">
    <property type="entry name" value="4-HYDROXYBENZOATE SOLANESYLTRANSFERASE"/>
    <property type="match status" value="1"/>
</dbReference>
<dbReference type="PANTHER" id="PTHR43448">
    <property type="entry name" value="PROTOHEME IX FARNESYLTRANSFERASE, MITOCHONDRIAL"/>
    <property type="match status" value="1"/>
</dbReference>
<dbReference type="Pfam" id="PF01040">
    <property type="entry name" value="UbiA"/>
    <property type="match status" value="1"/>
</dbReference>
<dbReference type="PROSITE" id="PS00943">
    <property type="entry name" value="UBIA"/>
    <property type="match status" value="1"/>
</dbReference>
<name>COXX_BORPD</name>
<gene>
    <name evidence="1" type="primary">ctaB</name>
    <name type="ordered locus">Bpet0177</name>
</gene>